<accession>Q58E26</accession>
<evidence type="ECO:0000250" key="1">
    <source>
        <dbReference type="UniProtKB" id="Q9Y320"/>
    </source>
</evidence>
<evidence type="ECO:0000255" key="2"/>
<evidence type="ECO:0000305" key="3"/>
<gene>
    <name type="primary">tmx2</name>
    <name type="synonym">txndc14</name>
</gene>
<keyword id="KW-1015">Disulfide bond</keyword>
<keyword id="KW-0256">Endoplasmic reticulum</keyword>
<keyword id="KW-0472">Membrane</keyword>
<keyword id="KW-0496">Mitochondrion</keyword>
<keyword id="KW-1185">Reference proteome</keyword>
<keyword id="KW-0732">Signal</keyword>
<keyword id="KW-0812">Transmembrane</keyword>
<keyword id="KW-1133">Transmembrane helix</keyword>
<organism>
    <name type="scientific">Xenopus laevis</name>
    <name type="common">African clawed frog</name>
    <dbReference type="NCBI Taxonomy" id="8355"/>
    <lineage>
        <taxon>Eukaryota</taxon>
        <taxon>Metazoa</taxon>
        <taxon>Chordata</taxon>
        <taxon>Craniata</taxon>
        <taxon>Vertebrata</taxon>
        <taxon>Euteleostomi</taxon>
        <taxon>Amphibia</taxon>
        <taxon>Batrachia</taxon>
        <taxon>Anura</taxon>
        <taxon>Pipoidea</taxon>
        <taxon>Pipidae</taxon>
        <taxon>Xenopodinae</taxon>
        <taxon>Xenopus</taxon>
        <taxon>Xenopus</taxon>
    </lineage>
</organism>
<proteinExistence type="evidence at transcript level"/>
<sequence>MAVLAPLLAVLYAAPGLLRWVSQPYYLISALLSASFLLVRKVPPACSVLPTQREDGNPCDFDWREVEILMFLSAIVMMKNRRSITVEQHIGNIFMFSKVANTILFFRLDLRMGLLYITLCIVFLMTCKPPLYLGPEHIKYFSDKTLEEEMQSDGRVSWIVEFFANWSSECQSFAPIYAELSLKYNCAGLKFGKVDIGRYPEVSCRYSISPSPLSKQLPTLILFQGGREVFRRPQVDKKGRAVSWSFTQENVIREFNLNELYLKAKKIRKHQEESIHENEWNDGKKDQ</sequence>
<comment type="function">
    <text evidence="1">Endoplasmic reticulum and mitochondria-associated protein that probably functions as a regulator of cellular redox state and thereby regulates protein post-translational modification, protein folding and mitochondrial activity.</text>
</comment>
<comment type="subunit">
    <text evidence="1">Monomer (By similarity). Homodimer; disulfide-linked (By similarity). Occurs in both reduced and oxidized monomeric form (By similarity). Oxidative conditions increase homodimerization (By similarity).</text>
</comment>
<comment type="subcellular location">
    <subcellularLocation>
        <location evidence="1">Endoplasmic reticulum membrane</location>
        <topology evidence="2">Single-pass type I membrane protein</topology>
    </subcellularLocation>
    <subcellularLocation>
        <location evidence="1">Mitochondrion membrane</location>
        <topology evidence="2">Single-pass type I membrane protein</topology>
    </subcellularLocation>
    <text evidence="1">Localizes to endoplasmic reticulum mitochondria-associated membrane (MAMs) that connect the endoplasmic reticulum and the mitochondria.</text>
</comment>
<comment type="domain">
    <text evidence="3">The thioredoxin domain lacks the 2 redox-active cysteines, suggesting that it lacks thioredoxin activity.</text>
</comment>
<comment type="domain">
    <text evidence="3">The di-lysine motif confers endoplasmic reticulum localization for type I membrane proteins.</text>
</comment>
<feature type="signal peptide" evidence="2">
    <location>
        <begin position="1"/>
        <end position="13"/>
    </location>
</feature>
<feature type="chain" id="PRO_0000315758" description="Thioredoxin-related transmembrane protein 2">
    <location>
        <begin position="14"/>
        <end position="287"/>
    </location>
</feature>
<feature type="topological domain" description="Extracellular" evidence="2">
    <location>
        <begin position="14"/>
        <end position="112"/>
    </location>
</feature>
<feature type="transmembrane region" description="Helical" evidence="2">
    <location>
        <begin position="113"/>
        <end position="133"/>
    </location>
</feature>
<feature type="topological domain" description="Cytoplasmic" evidence="2">
    <location>
        <begin position="134"/>
        <end position="287"/>
    </location>
</feature>
<feature type="domain" description="Thioredoxin">
    <location>
        <begin position="137"/>
        <end position="209"/>
    </location>
</feature>
<feature type="short sequence motif" description="Di-lysine motif" evidence="3">
    <location>
        <begin position="284"/>
        <end position="287"/>
    </location>
</feature>
<protein>
    <recommendedName>
        <fullName>Thioredoxin-related transmembrane protein 2</fullName>
    </recommendedName>
    <alternativeName>
        <fullName>Thioredoxin domain-containing protein 14</fullName>
    </alternativeName>
</protein>
<name>TMX2_XENLA</name>
<reference key="1">
    <citation type="submission" date="2005-03" db="EMBL/GenBank/DDBJ databases">
        <authorList>
            <consortium name="NIH - Xenopus Gene Collection (XGC) project"/>
        </authorList>
    </citation>
    <scope>NUCLEOTIDE SEQUENCE [LARGE SCALE MRNA]</scope>
    <source>
        <tissue>Embryo</tissue>
    </source>
</reference>
<dbReference type="EMBL" id="BC092100">
    <property type="protein sequence ID" value="AAH92100.1"/>
    <property type="molecule type" value="mRNA"/>
</dbReference>
<dbReference type="RefSeq" id="NP_001089331.1">
    <property type="nucleotide sequence ID" value="NM_001095862.1"/>
</dbReference>
<dbReference type="SMR" id="Q58E26"/>
<dbReference type="DNASU" id="734381"/>
<dbReference type="GeneID" id="734381"/>
<dbReference type="KEGG" id="xla:734381"/>
<dbReference type="AGR" id="Xenbase:XB-GENE-865871"/>
<dbReference type="CTD" id="734381"/>
<dbReference type="Xenbase" id="XB-GENE-865871">
    <property type="gene designation" value="tmx2.S"/>
</dbReference>
<dbReference type="OrthoDB" id="20229at2759"/>
<dbReference type="Proteomes" id="UP000186698">
    <property type="component" value="Chromosome 7S"/>
</dbReference>
<dbReference type="Bgee" id="734381">
    <property type="expression patterns" value="Expressed in brain and 19 other cell types or tissues"/>
</dbReference>
<dbReference type="GO" id="GO:0005789">
    <property type="term" value="C:endoplasmic reticulum membrane"/>
    <property type="evidence" value="ECO:0000318"/>
    <property type="project" value="GO_Central"/>
</dbReference>
<dbReference type="GO" id="GO:0044233">
    <property type="term" value="C:mitochondria-associated endoplasmic reticulum membrane contact site"/>
    <property type="evidence" value="ECO:0000250"/>
    <property type="project" value="UniProtKB"/>
</dbReference>
<dbReference type="GO" id="GO:0031966">
    <property type="term" value="C:mitochondrial membrane"/>
    <property type="evidence" value="ECO:0007669"/>
    <property type="project" value="UniProtKB-SubCell"/>
</dbReference>
<dbReference type="GO" id="GO:0005739">
    <property type="term" value="C:mitochondrion"/>
    <property type="evidence" value="ECO:0000318"/>
    <property type="project" value="GO_Central"/>
</dbReference>
<dbReference type="GO" id="GO:0015036">
    <property type="term" value="F:disulfide oxidoreductase activity"/>
    <property type="evidence" value="ECO:0000250"/>
    <property type="project" value="UniProtKB"/>
</dbReference>
<dbReference type="GO" id="GO:0007420">
    <property type="term" value="P:brain development"/>
    <property type="evidence" value="ECO:0000250"/>
    <property type="project" value="UniProtKB"/>
</dbReference>
<dbReference type="CDD" id="cd02962">
    <property type="entry name" value="TMX2"/>
    <property type="match status" value="1"/>
</dbReference>
<dbReference type="Gene3D" id="3.40.30.10">
    <property type="entry name" value="Glutaredoxin"/>
    <property type="match status" value="1"/>
</dbReference>
<dbReference type="InterPro" id="IPR036249">
    <property type="entry name" value="Thioredoxin-like_sf"/>
</dbReference>
<dbReference type="InterPro" id="IPR013766">
    <property type="entry name" value="Thioredoxin_domain"/>
</dbReference>
<dbReference type="InterPro" id="IPR039101">
    <property type="entry name" value="TMX2"/>
</dbReference>
<dbReference type="InterPro" id="IPR037463">
    <property type="entry name" value="TMX2_thioredoxin_dom"/>
</dbReference>
<dbReference type="PANTHER" id="PTHR15853">
    <property type="entry name" value="THIOREDOXIN-RELATED"/>
    <property type="match status" value="1"/>
</dbReference>
<dbReference type="PANTHER" id="PTHR15853:SF0">
    <property type="entry name" value="THIOREDOXIN-RELATED TRANSMEMBRANE PROTEIN 2"/>
    <property type="match status" value="1"/>
</dbReference>
<dbReference type="Pfam" id="PF00085">
    <property type="entry name" value="Thioredoxin"/>
    <property type="match status" value="1"/>
</dbReference>
<dbReference type="SUPFAM" id="SSF52833">
    <property type="entry name" value="Thioredoxin-like"/>
    <property type="match status" value="1"/>
</dbReference>